<organism>
    <name type="scientific">Paracoccus denitrificans</name>
    <dbReference type="NCBI Taxonomy" id="266"/>
    <lineage>
        <taxon>Bacteria</taxon>
        <taxon>Pseudomonadati</taxon>
        <taxon>Pseudomonadota</taxon>
        <taxon>Alphaproteobacteria</taxon>
        <taxon>Rhodobacterales</taxon>
        <taxon>Paracoccaceae</taxon>
        <taxon>Paracoccus</taxon>
    </lineage>
</organism>
<evidence type="ECO:0000250" key="1"/>
<evidence type="ECO:0000305" key="2"/>
<name>COX1A_PARDE</name>
<gene>
    <name type="primary">ctaDI</name>
    <name type="synonym">coi</name>
</gene>
<protein>
    <recommendedName>
        <fullName>Cytochrome c oxidase subunit 1-alpha</fullName>
        <ecNumber>7.1.1.9</ecNumber>
    </recommendedName>
    <alternativeName>
        <fullName>Cytochrome aa3 subunit 1-alpha</fullName>
    </alternativeName>
    <alternativeName>
        <fullName>Cytochrome c oxidase polypeptide I-alpha</fullName>
    </alternativeName>
</protein>
<proteinExistence type="inferred from homology"/>
<feature type="chain" id="PRO_0000183455" description="Cytochrome c oxidase subunit 1-alpha">
    <location>
        <begin position="1"/>
        <end position="554"/>
    </location>
</feature>
<feature type="transmembrane region" description="Helical" evidence="1">
    <location>
        <begin position="26"/>
        <end position="56"/>
    </location>
</feature>
<feature type="transmembrane region" description="Helical" evidence="1">
    <location>
        <begin position="81"/>
        <end position="118"/>
    </location>
</feature>
<feature type="transmembrane region" description="Helical" evidence="1">
    <location>
        <begin position="127"/>
        <end position="148"/>
    </location>
</feature>
<feature type="transmembrane region" description="Helical" evidence="1">
    <location>
        <begin position="175"/>
        <end position="203"/>
    </location>
</feature>
<feature type="transmembrane region" description="Helical" evidence="1">
    <location>
        <begin position="215"/>
        <end position="248"/>
    </location>
</feature>
<feature type="transmembrane region" description="Helical" evidence="1">
    <location>
        <begin position="260"/>
        <end position="295"/>
    </location>
</feature>
<feature type="transmembrane region" description="Helical" evidence="1">
    <location>
        <begin position="301"/>
        <end position="319"/>
    </location>
</feature>
<feature type="transmembrane region" description="Helical" evidence="1">
    <location>
        <begin position="331"/>
        <end position="359"/>
    </location>
</feature>
<feature type="transmembrane region" description="Helical" evidence="1">
    <location>
        <begin position="367"/>
        <end position="390"/>
    </location>
</feature>
<feature type="transmembrane region" description="Helical" evidence="1">
    <location>
        <begin position="399"/>
        <end position="425"/>
    </location>
</feature>
<feature type="transmembrane region" description="Helical" evidence="1">
    <location>
        <begin position="436"/>
        <end position="463"/>
    </location>
</feature>
<feature type="transmembrane region" description="Helical" evidence="1">
    <location>
        <begin position="478"/>
        <end position="508"/>
    </location>
</feature>
<feature type="binding site" description="axial binding residue" evidence="1">
    <location>
        <position position="91"/>
    </location>
    <ligand>
        <name>Fe(II)-heme a</name>
        <dbReference type="ChEBI" id="CHEBI:61715"/>
    </ligand>
    <ligandPart>
        <name>Fe</name>
        <dbReference type="ChEBI" id="CHEBI:18248"/>
    </ligandPart>
</feature>
<feature type="binding site" evidence="1">
    <location>
        <position position="273"/>
    </location>
    <ligand>
        <name>Cu cation</name>
        <dbReference type="ChEBI" id="CHEBI:23378"/>
        <label>B</label>
    </ligand>
</feature>
<feature type="binding site" evidence="1">
    <location>
        <position position="277"/>
    </location>
    <ligand>
        <name>Cu cation</name>
        <dbReference type="ChEBI" id="CHEBI:23378"/>
        <label>B</label>
    </ligand>
</feature>
<feature type="binding site" evidence="1">
    <location>
        <position position="322"/>
    </location>
    <ligand>
        <name>Cu cation</name>
        <dbReference type="ChEBI" id="CHEBI:23378"/>
        <label>B</label>
    </ligand>
</feature>
<feature type="binding site" evidence="1">
    <location>
        <position position="323"/>
    </location>
    <ligand>
        <name>Cu cation</name>
        <dbReference type="ChEBI" id="CHEBI:23378"/>
        <label>B</label>
    </ligand>
</feature>
<feature type="binding site" description="axial binding residue" evidence="1">
    <location>
        <position position="406"/>
    </location>
    <ligand>
        <name>heme a3</name>
        <dbReference type="ChEBI" id="CHEBI:83282"/>
    </ligand>
    <ligandPart>
        <name>Fe</name>
        <dbReference type="ChEBI" id="CHEBI:18248"/>
    </ligandPart>
</feature>
<feature type="binding site" description="axial binding residue" evidence="1">
    <location>
        <position position="408"/>
    </location>
    <ligand>
        <name>Fe(II)-heme a</name>
        <dbReference type="ChEBI" id="CHEBI:61715"/>
    </ligand>
    <ligandPart>
        <name>Fe</name>
        <dbReference type="ChEBI" id="CHEBI:18248"/>
    </ligandPart>
</feature>
<feature type="disulfide bond" evidence="1">
    <location>
        <begin position="63"/>
        <end position="77"/>
    </location>
</feature>
<feature type="cross-link" description="1'-histidyl-3'-tyrosine (His-Tyr)" evidence="1">
    <location>
        <begin position="273"/>
        <end position="277"/>
    </location>
</feature>
<accession>P08305</accession>
<sequence length="554" mass="62013">MSAQISDSIEEKRGFFTRWFMSTNHKDIGVLYLFTAGLAGLISVTLTVYMRMELQHPGVQYMCLEGMRLVADAAAECTPNAHLWNVVVTYHGILMMFFVVIPALFGGFGNYFMPLHIGAPDMAFPRLNNLSYWLYVCGVSLAIASLLSPGGSDQPGAGVGWVLYPPLSTTEAGYAMDLAIFAVHVSGATSILGAINIITTFLNMRAPGMTLFKVPLFAWAVFITAWMILLSLPVLAGGITMLLMDRNFGTQFFDPAGGGDPVLYQHILWFFGHPEVYMLILPGFGIISHVISTFARKPIFGYLPMVLAMAAIAFLGFIVWAHHMYTAGMSLTQQTYFQMATMTIAVPTGIKVFSWIATMWGGSIEFKTPMLWALAFLFTVGGVTGVVIAQGSLDRVYHDTYYIVAHFHYVMSLGALFAIFAGTYYWIGKMSGRQYPEWAGQLHFWMMFIGSNLIFFPQHFLGRQGMPRRYIDYPVEFSYWNNISSIGAYISFASFLFFIGIVFYTLFAGKPVNVPNYWNEHADTLEWTLPSPPPEHTFETLPKPEDWDRAQAHR</sequence>
<reference key="1">
    <citation type="journal article" date="1987" name="EMBO J.">
        <title>Isolation and analysis of the genes for cytochrome c oxidase in Paracoccus denitrificans.</title>
        <authorList>
            <person name="Raitio M."/>
            <person name="Jalli T."/>
            <person name="Saraste M."/>
        </authorList>
    </citation>
    <scope>NUCLEOTIDE SEQUENCE [GENOMIC DNA]</scope>
    <source>
        <strain>S1657</strain>
    </source>
</reference>
<dbReference type="EC" id="7.1.1.9"/>
<dbReference type="EMBL" id="X05829">
    <property type="protein sequence ID" value="CAA29274.1"/>
    <property type="molecule type" value="Genomic_DNA"/>
</dbReference>
<dbReference type="PIR" id="S03809">
    <property type="entry name" value="S03809"/>
</dbReference>
<dbReference type="SMR" id="P08305"/>
<dbReference type="UniPathway" id="UPA00705"/>
<dbReference type="GO" id="GO:0005886">
    <property type="term" value="C:plasma membrane"/>
    <property type="evidence" value="ECO:0007669"/>
    <property type="project" value="UniProtKB-SubCell"/>
</dbReference>
<dbReference type="GO" id="GO:0045277">
    <property type="term" value="C:respiratory chain complex IV"/>
    <property type="evidence" value="ECO:0007669"/>
    <property type="project" value="InterPro"/>
</dbReference>
<dbReference type="GO" id="GO:0004129">
    <property type="term" value="F:cytochrome-c oxidase activity"/>
    <property type="evidence" value="ECO:0007669"/>
    <property type="project" value="UniProtKB-EC"/>
</dbReference>
<dbReference type="GO" id="GO:0020037">
    <property type="term" value="F:heme binding"/>
    <property type="evidence" value="ECO:0007669"/>
    <property type="project" value="InterPro"/>
</dbReference>
<dbReference type="GO" id="GO:0046872">
    <property type="term" value="F:metal ion binding"/>
    <property type="evidence" value="ECO:0007669"/>
    <property type="project" value="UniProtKB-KW"/>
</dbReference>
<dbReference type="GO" id="GO:0015990">
    <property type="term" value="P:electron transport coupled proton transport"/>
    <property type="evidence" value="ECO:0007669"/>
    <property type="project" value="TreeGrafter"/>
</dbReference>
<dbReference type="GO" id="GO:0006119">
    <property type="term" value="P:oxidative phosphorylation"/>
    <property type="evidence" value="ECO:0007669"/>
    <property type="project" value="UniProtKB-UniPathway"/>
</dbReference>
<dbReference type="GO" id="GO:0022904">
    <property type="term" value="P:respiratory electron transport chain"/>
    <property type="evidence" value="ECO:0007669"/>
    <property type="project" value="TreeGrafter"/>
</dbReference>
<dbReference type="CDD" id="cd01663">
    <property type="entry name" value="Cyt_c_Oxidase_I"/>
    <property type="match status" value="1"/>
</dbReference>
<dbReference type="FunFam" id="1.20.210.10:FF:000004">
    <property type="entry name" value="Cytochrome c oxidase subunit 1"/>
    <property type="match status" value="1"/>
</dbReference>
<dbReference type="Gene3D" id="1.20.210.10">
    <property type="entry name" value="Cytochrome c oxidase-like, subunit I domain"/>
    <property type="match status" value="1"/>
</dbReference>
<dbReference type="InterPro" id="IPR023616">
    <property type="entry name" value="Cyt_c_oxase-like_su1_dom"/>
</dbReference>
<dbReference type="InterPro" id="IPR036927">
    <property type="entry name" value="Cyt_c_oxase-like_su1_sf"/>
</dbReference>
<dbReference type="InterPro" id="IPR000883">
    <property type="entry name" value="Cyt_C_Oxase_1"/>
</dbReference>
<dbReference type="InterPro" id="IPR023615">
    <property type="entry name" value="Cyt_c_Oxase_su1_BS"/>
</dbReference>
<dbReference type="InterPro" id="IPR033944">
    <property type="entry name" value="Cyt_c_oxase_su1_dom"/>
</dbReference>
<dbReference type="PANTHER" id="PTHR10422">
    <property type="entry name" value="CYTOCHROME C OXIDASE SUBUNIT 1"/>
    <property type="match status" value="1"/>
</dbReference>
<dbReference type="PANTHER" id="PTHR10422:SF18">
    <property type="entry name" value="CYTOCHROME C OXIDASE SUBUNIT 1"/>
    <property type="match status" value="1"/>
</dbReference>
<dbReference type="Pfam" id="PF00115">
    <property type="entry name" value="COX1"/>
    <property type="match status" value="1"/>
</dbReference>
<dbReference type="PRINTS" id="PR01165">
    <property type="entry name" value="CYCOXIDASEI"/>
</dbReference>
<dbReference type="SUPFAM" id="SSF81442">
    <property type="entry name" value="Cytochrome c oxidase subunit I-like"/>
    <property type="match status" value="1"/>
</dbReference>
<dbReference type="PROSITE" id="PS50855">
    <property type="entry name" value="COX1"/>
    <property type="match status" value="1"/>
</dbReference>
<dbReference type="PROSITE" id="PS00077">
    <property type="entry name" value="COX1_CUB"/>
    <property type="match status" value="1"/>
</dbReference>
<comment type="function">
    <text>Subunit I and II form the functional core of the enzyme complex. Electrons originating in cytochrome c are transferred via heme a and Cu(A) to the binuclear center formed by heme a3 and Cu(B). This cytochrome c oxidase shows proton pump activity across the membrane in addition to the electron transfer.</text>
</comment>
<comment type="catalytic activity">
    <reaction>
        <text>4 Fe(II)-[cytochrome c] + O2 + 8 H(+)(in) = 4 Fe(III)-[cytochrome c] + 2 H2O + 4 H(+)(out)</text>
        <dbReference type="Rhea" id="RHEA:11436"/>
        <dbReference type="Rhea" id="RHEA-COMP:10350"/>
        <dbReference type="Rhea" id="RHEA-COMP:14399"/>
        <dbReference type="ChEBI" id="CHEBI:15377"/>
        <dbReference type="ChEBI" id="CHEBI:15378"/>
        <dbReference type="ChEBI" id="CHEBI:15379"/>
        <dbReference type="ChEBI" id="CHEBI:29033"/>
        <dbReference type="ChEBI" id="CHEBI:29034"/>
        <dbReference type="EC" id="7.1.1.9"/>
    </reaction>
</comment>
<comment type="cofactor">
    <cofactor>
        <name>Cu(2+)</name>
        <dbReference type="ChEBI" id="CHEBI:29036"/>
    </cofactor>
    <text>Binds 1 copper B ion per subunit.</text>
</comment>
<comment type="cofactor">
    <cofactor>
        <name>heme</name>
        <dbReference type="ChEBI" id="CHEBI:30413"/>
    </cofactor>
    <text>Binds 2 heme groups per subunit.</text>
</comment>
<comment type="pathway">
    <text>Energy metabolism; oxidative phosphorylation.</text>
</comment>
<comment type="subcellular location">
    <subcellularLocation>
        <location>Cell inner membrane</location>
        <topology>Multi-pass membrane protein</topology>
    </subcellularLocation>
</comment>
<comment type="similarity">
    <text evidence="2">Belongs to the heme-copper respiratory oxidase family.</text>
</comment>
<keyword id="KW-0997">Cell inner membrane</keyword>
<keyword id="KW-1003">Cell membrane</keyword>
<keyword id="KW-0186">Copper</keyword>
<keyword id="KW-1015">Disulfide bond</keyword>
<keyword id="KW-0249">Electron transport</keyword>
<keyword id="KW-0349">Heme</keyword>
<keyword id="KW-0375">Hydrogen ion transport</keyword>
<keyword id="KW-0406">Ion transport</keyword>
<keyword id="KW-0408">Iron</keyword>
<keyword id="KW-0472">Membrane</keyword>
<keyword id="KW-0479">Metal-binding</keyword>
<keyword id="KW-0679">Respiratory chain</keyword>
<keyword id="KW-1278">Translocase</keyword>
<keyword id="KW-0812">Transmembrane</keyword>
<keyword id="KW-1133">Transmembrane helix</keyword>
<keyword id="KW-0813">Transport</keyword>